<accession>Q09X32</accession>
<comment type="function">
    <text evidence="1">Produces ATP from ADP in the presence of a proton gradient across the membrane. The alpha chain is a regulatory subunit.</text>
</comment>
<comment type="catalytic activity">
    <reaction evidence="1">
        <text>ATP + H2O + 4 H(+)(in) = ADP + phosphate + 5 H(+)(out)</text>
        <dbReference type="Rhea" id="RHEA:57720"/>
        <dbReference type="ChEBI" id="CHEBI:15377"/>
        <dbReference type="ChEBI" id="CHEBI:15378"/>
        <dbReference type="ChEBI" id="CHEBI:30616"/>
        <dbReference type="ChEBI" id="CHEBI:43474"/>
        <dbReference type="ChEBI" id="CHEBI:456216"/>
        <dbReference type="EC" id="7.1.2.2"/>
    </reaction>
</comment>
<comment type="subunit">
    <text evidence="1">F-type ATPases have 2 components, CF(1) - the catalytic core - and CF(0) - the membrane proton channel. CF(1) has five subunits: alpha(3), beta(3), gamma(1), delta(1), epsilon(1). CF(0) has four main subunits: a, b, b' and c.</text>
</comment>
<comment type="subcellular location">
    <subcellularLocation>
        <location evidence="1">Plastid</location>
        <location evidence="1">Chloroplast thylakoid membrane</location>
        <topology evidence="1">Peripheral membrane protein</topology>
    </subcellularLocation>
</comment>
<comment type="similarity">
    <text evidence="1">Belongs to the ATPase alpha/beta chains family.</text>
</comment>
<name>ATPA_MORIN</name>
<organism>
    <name type="scientific">Morus indica</name>
    <name type="common">Mulberry</name>
    <dbReference type="NCBI Taxonomy" id="248361"/>
    <lineage>
        <taxon>Eukaryota</taxon>
        <taxon>Viridiplantae</taxon>
        <taxon>Streptophyta</taxon>
        <taxon>Embryophyta</taxon>
        <taxon>Tracheophyta</taxon>
        <taxon>Spermatophyta</taxon>
        <taxon>Magnoliopsida</taxon>
        <taxon>eudicotyledons</taxon>
        <taxon>Gunneridae</taxon>
        <taxon>Pentapetalae</taxon>
        <taxon>rosids</taxon>
        <taxon>fabids</taxon>
        <taxon>Rosales</taxon>
        <taxon>Moraceae</taxon>
        <taxon>Moreae</taxon>
        <taxon>Morus</taxon>
    </lineage>
</organism>
<geneLocation type="chloroplast"/>
<dbReference type="EC" id="7.1.2.2" evidence="1"/>
<dbReference type="EMBL" id="DQ226511">
    <property type="protein sequence ID" value="ABB20943.1"/>
    <property type="molecule type" value="Genomic_DNA"/>
</dbReference>
<dbReference type="RefSeq" id="YP_762246.1">
    <property type="nucleotide sequence ID" value="NC_008359.1"/>
</dbReference>
<dbReference type="SMR" id="Q09X32"/>
<dbReference type="GeneID" id="4290663"/>
<dbReference type="GO" id="GO:0009535">
    <property type="term" value="C:chloroplast thylakoid membrane"/>
    <property type="evidence" value="ECO:0007669"/>
    <property type="project" value="UniProtKB-SubCell"/>
</dbReference>
<dbReference type="GO" id="GO:0045259">
    <property type="term" value="C:proton-transporting ATP synthase complex"/>
    <property type="evidence" value="ECO:0007669"/>
    <property type="project" value="UniProtKB-KW"/>
</dbReference>
<dbReference type="GO" id="GO:0043531">
    <property type="term" value="F:ADP binding"/>
    <property type="evidence" value="ECO:0007669"/>
    <property type="project" value="TreeGrafter"/>
</dbReference>
<dbReference type="GO" id="GO:0005524">
    <property type="term" value="F:ATP binding"/>
    <property type="evidence" value="ECO:0007669"/>
    <property type="project" value="UniProtKB-UniRule"/>
</dbReference>
<dbReference type="GO" id="GO:0046933">
    <property type="term" value="F:proton-transporting ATP synthase activity, rotational mechanism"/>
    <property type="evidence" value="ECO:0007669"/>
    <property type="project" value="UniProtKB-UniRule"/>
</dbReference>
<dbReference type="CDD" id="cd18113">
    <property type="entry name" value="ATP-synt_F1_alpha_C"/>
    <property type="match status" value="1"/>
</dbReference>
<dbReference type="CDD" id="cd18116">
    <property type="entry name" value="ATP-synt_F1_alpha_N"/>
    <property type="match status" value="1"/>
</dbReference>
<dbReference type="CDD" id="cd01132">
    <property type="entry name" value="F1-ATPase_alpha_CD"/>
    <property type="match status" value="1"/>
</dbReference>
<dbReference type="FunFam" id="1.20.150.20:FF:000001">
    <property type="entry name" value="ATP synthase subunit alpha"/>
    <property type="match status" value="1"/>
</dbReference>
<dbReference type="FunFam" id="2.40.30.20:FF:000001">
    <property type="entry name" value="ATP synthase subunit alpha"/>
    <property type="match status" value="1"/>
</dbReference>
<dbReference type="FunFam" id="3.40.50.300:FF:000002">
    <property type="entry name" value="ATP synthase subunit alpha"/>
    <property type="match status" value="1"/>
</dbReference>
<dbReference type="Gene3D" id="2.40.30.20">
    <property type="match status" value="1"/>
</dbReference>
<dbReference type="Gene3D" id="1.20.150.20">
    <property type="entry name" value="ATP synthase alpha/beta chain, C-terminal domain"/>
    <property type="match status" value="1"/>
</dbReference>
<dbReference type="Gene3D" id="3.40.50.300">
    <property type="entry name" value="P-loop containing nucleotide triphosphate hydrolases"/>
    <property type="match status" value="1"/>
</dbReference>
<dbReference type="HAMAP" id="MF_01346">
    <property type="entry name" value="ATP_synth_alpha_bact"/>
    <property type="match status" value="1"/>
</dbReference>
<dbReference type="InterPro" id="IPR023366">
    <property type="entry name" value="ATP_synth_asu-like_sf"/>
</dbReference>
<dbReference type="InterPro" id="IPR000793">
    <property type="entry name" value="ATP_synth_asu_C"/>
</dbReference>
<dbReference type="InterPro" id="IPR038376">
    <property type="entry name" value="ATP_synth_asu_C_sf"/>
</dbReference>
<dbReference type="InterPro" id="IPR033732">
    <property type="entry name" value="ATP_synth_F1_a_nt-bd_dom"/>
</dbReference>
<dbReference type="InterPro" id="IPR005294">
    <property type="entry name" value="ATP_synth_F1_asu"/>
</dbReference>
<dbReference type="InterPro" id="IPR020003">
    <property type="entry name" value="ATPase_a/bsu_AS"/>
</dbReference>
<dbReference type="InterPro" id="IPR004100">
    <property type="entry name" value="ATPase_F1/V1/A1_a/bsu_N"/>
</dbReference>
<dbReference type="InterPro" id="IPR036121">
    <property type="entry name" value="ATPase_F1/V1/A1_a/bsu_N_sf"/>
</dbReference>
<dbReference type="InterPro" id="IPR000194">
    <property type="entry name" value="ATPase_F1/V1/A1_a/bsu_nucl-bd"/>
</dbReference>
<dbReference type="InterPro" id="IPR027417">
    <property type="entry name" value="P-loop_NTPase"/>
</dbReference>
<dbReference type="NCBIfam" id="TIGR00962">
    <property type="entry name" value="atpA"/>
    <property type="match status" value="1"/>
</dbReference>
<dbReference type="NCBIfam" id="NF009884">
    <property type="entry name" value="PRK13343.1"/>
    <property type="match status" value="1"/>
</dbReference>
<dbReference type="PANTHER" id="PTHR48082">
    <property type="entry name" value="ATP SYNTHASE SUBUNIT ALPHA, MITOCHONDRIAL"/>
    <property type="match status" value="1"/>
</dbReference>
<dbReference type="PANTHER" id="PTHR48082:SF2">
    <property type="entry name" value="ATP SYNTHASE SUBUNIT ALPHA, MITOCHONDRIAL"/>
    <property type="match status" value="1"/>
</dbReference>
<dbReference type="Pfam" id="PF00006">
    <property type="entry name" value="ATP-synt_ab"/>
    <property type="match status" value="1"/>
</dbReference>
<dbReference type="Pfam" id="PF00306">
    <property type="entry name" value="ATP-synt_ab_C"/>
    <property type="match status" value="1"/>
</dbReference>
<dbReference type="Pfam" id="PF02874">
    <property type="entry name" value="ATP-synt_ab_N"/>
    <property type="match status" value="1"/>
</dbReference>
<dbReference type="PIRSF" id="PIRSF039088">
    <property type="entry name" value="F_ATPase_subunit_alpha"/>
    <property type="match status" value="1"/>
</dbReference>
<dbReference type="SUPFAM" id="SSF47917">
    <property type="entry name" value="C-terminal domain of alpha and beta subunits of F1 ATP synthase"/>
    <property type="match status" value="1"/>
</dbReference>
<dbReference type="SUPFAM" id="SSF50615">
    <property type="entry name" value="N-terminal domain of alpha and beta subunits of F1 ATP synthase"/>
    <property type="match status" value="1"/>
</dbReference>
<dbReference type="SUPFAM" id="SSF52540">
    <property type="entry name" value="P-loop containing nucleoside triphosphate hydrolases"/>
    <property type="match status" value="1"/>
</dbReference>
<dbReference type="PROSITE" id="PS00152">
    <property type="entry name" value="ATPASE_ALPHA_BETA"/>
    <property type="match status" value="1"/>
</dbReference>
<reference key="1">
    <citation type="submission" date="2005-09" db="EMBL/GenBank/DDBJ databases">
        <title>The chloroplast genome of mulberry: structural features and comparative analysis.</title>
        <authorList>
            <person name="Ravi V."/>
            <person name="Khurana J.P."/>
            <person name="Tyagi A.K."/>
            <person name="Khurana P."/>
        </authorList>
    </citation>
    <scope>NUCLEOTIDE SEQUENCE [LARGE SCALE GENOMIC DNA]</scope>
    <source>
        <strain>cv. K2</strain>
    </source>
</reference>
<evidence type="ECO:0000255" key="1">
    <source>
        <dbReference type="HAMAP-Rule" id="MF_01346"/>
    </source>
</evidence>
<gene>
    <name evidence="1" type="primary">atpA</name>
    <name type="ordered locus">MoinCp006</name>
</gene>
<proteinExistence type="inferred from homology"/>
<protein>
    <recommendedName>
        <fullName evidence="1">ATP synthase subunit alpha, chloroplastic</fullName>
        <ecNumber evidence="1">7.1.2.2</ecNumber>
    </recommendedName>
    <alternativeName>
        <fullName evidence="1">ATP synthase F1 sector subunit alpha</fullName>
    </alternativeName>
    <alternativeName>
        <fullName evidence="1">F-ATPase subunit alpha</fullName>
    </alternativeName>
</protein>
<feature type="chain" id="PRO_0000275170" description="ATP synthase subunit alpha, chloroplastic">
    <location>
        <begin position="1"/>
        <end position="507"/>
    </location>
</feature>
<feature type="binding site" evidence="1">
    <location>
        <begin position="170"/>
        <end position="177"/>
    </location>
    <ligand>
        <name>ATP</name>
        <dbReference type="ChEBI" id="CHEBI:30616"/>
    </ligand>
</feature>
<feature type="site" description="Required for activity" evidence="1">
    <location>
        <position position="363"/>
    </location>
</feature>
<keyword id="KW-0066">ATP synthesis</keyword>
<keyword id="KW-0067">ATP-binding</keyword>
<keyword id="KW-0139">CF(1)</keyword>
<keyword id="KW-0150">Chloroplast</keyword>
<keyword id="KW-0375">Hydrogen ion transport</keyword>
<keyword id="KW-0406">Ion transport</keyword>
<keyword id="KW-0472">Membrane</keyword>
<keyword id="KW-0547">Nucleotide-binding</keyword>
<keyword id="KW-0934">Plastid</keyword>
<keyword id="KW-0793">Thylakoid</keyword>
<keyword id="KW-1278">Translocase</keyword>
<keyword id="KW-0813">Transport</keyword>
<sequence>MVTIRADEISDIIRERIEQYNREVKILNTGTVLQVGDGIARIYGLDEVMAGELVEFEEGTIGIALNLESNNVGVVLMGDGLMIQEGSSVKATGRIAQIPVSEAFLGRVINALAKPIDGRGEISASESRLIESPAPGIISRRSVYEPLQTGLIAIDSMIPIGRGQRELIIGDRQTGKTAVATDTILNQQGQNVICVYVAIGQKASSVAQVVTTLQERGAMEYTIVVAETADSPATLQYLAPYTGATLAEYFMYREQHTSIIYDDPSKQAQAYRQMSLLLRRPPGREAYPGDVFYLHSRLLERAAKSSSRLGEGSMTALPIVETQSGDVSAYIPTNVISITDGQIFLSADLFNAGIRPAINVGISVSRVGSAAQIKAMKQVAGKLKLELAQFAELEAFAQFASDLDKATQNQLARGQRLRELLKQSQSAPLAVEEQIITIYTGTNGYLDSLEIGQVRKFLVELRTYLKTNKPQFQEIISSTKTFTKEAEALLKEAIQEQMERFLLQEQV</sequence>